<feature type="chain" id="PRO_0000428073" description="PPE family protein PPE10">
    <location>
        <begin position="1"/>
        <end position="487"/>
    </location>
</feature>
<feature type="region of interest" description="Disordered" evidence="3">
    <location>
        <begin position="398"/>
        <end position="487"/>
    </location>
</feature>
<feature type="compositionally biased region" description="Low complexity" evidence="3">
    <location>
        <begin position="398"/>
        <end position="424"/>
    </location>
</feature>
<feature type="compositionally biased region" description="Polar residues" evidence="3">
    <location>
        <begin position="428"/>
        <end position="446"/>
    </location>
</feature>
<sequence>MTSPHFAWLPPEINSALMFAGPGSGPLIAAATAWGELAEELLASIASLGSVTSELTSGAWLGPSAAAMMAVATQYLAWLSTAAAQAEQAAAQAMAIATAFEAALAATVQPAVVAANRGLMQLLAATNWFGQNAPALMDVEAAYEQMWALDVAAMAGYHFDASAAVAQLAPWQQVLRNLGIDIGKNGQINLGFGNTGSGNIGNNNIGNNNIGSGNTGTGNIGSGNTGSGNLGLGNLGDGNIGFGNTGSGNIGFGITGDHQMGFGGFNSGSGNIGFGNSGTGNVGLFNSGSGNIGIGNSGSLNSGIGTSGTINAGLGSAGSLNTSFWNAGMQNAALGSAAGSEAALVSSAGYATGGMSTAALSSGILASALGSTGGLQHGLANVLNSGLTNTPVAAPASAPVGGLDSGNPNPGSGSAAAGSGANPGLRSPGTSYPSFVNSGSNDSGLRNTAVREPSTPGSGIPKSNFYPSPDRESAYASPRIGQPVGSE</sequence>
<organism>
    <name type="scientific">Mycobacterium tuberculosis (strain CDC 1551 / Oshkosh)</name>
    <dbReference type="NCBI Taxonomy" id="83331"/>
    <lineage>
        <taxon>Bacteria</taxon>
        <taxon>Bacillati</taxon>
        <taxon>Actinomycetota</taxon>
        <taxon>Actinomycetes</taxon>
        <taxon>Mycobacteriales</taxon>
        <taxon>Mycobacteriaceae</taxon>
        <taxon>Mycobacterium</taxon>
        <taxon>Mycobacterium tuberculosis complex</taxon>
    </lineage>
</organism>
<name>PPE10_MYCTO</name>
<evidence type="ECO:0000250" key="1">
    <source>
        <dbReference type="UniProtKB" id="B2HQQ1"/>
    </source>
</evidence>
<evidence type="ECO:0000250" key="2">
    <source>
        <dbReference type="UniProtKB" id="P9WI41"/>
    </source>
</evidence>
<evidence type="ECO:0000256" key="3">
    <source>
        <dbReference type="SAM" id="MobiDB-lite"/>
    </source>
</evidence>
<evidence type="ECO:0000305" key="4"/>
<gene>
    <name type="primary">PPE10</name>
    <name type="ordered locus">MT0458</name>
</gene>
<keyword id="KW-1185">Reference proteome</keyword>
<keyword id="KW-0964">Secreted</keyword>
<reference key="1">
    <citation type="journal article" date="2002" name="J. Bacteriol.">
        <title>Whole-genome comparison of Mycobacterium tuberculosis clinical and laboratory strains.</title>
        <authorList>
            <person name="Fleischmann R.D."/>
            <person name="Alland D."/>
            <person name="Eisen J.A."/>
            <person name="Carpenter L."/>
            <person name="White O."/>
            <person name="Peterson J.D."/>
            <person name="DeBoy R.T."/>
            <person name="Dodson R.J."/>
            <person name="Gwinn M.L."/>
            <person name="Haft D.H."/>
            <person name="Hickey E.K."/>
            <person name="Kolonay J.F."/>
            <person name="Nelson W.C."/>
            <person name="Umayam L.A."/>
            <person name="Ermolaeva M.D."/>
            <person name="Salzberg S.L."/>
            <person name="Delcher A."/>
            <person name="Utterback T.R."/>
            <person name="Weidman J.F."/>
            <person name="Khouri H.M."/>
            <person name="Gill J."/>
            <person name="Mikula A."/>
            <person name="Bishai W."/>
            <person name="Jacobs W.R. Jr."/>
            <person name="Venter J.C."/>
            <person name="Fraser C.M."/>
        </authorList>
    </citation>
    <scope>NUCLEOTIDE SEQUENCE [LARGE SCALE GENOMIC DNA]</scope>
    <source>
        <strain>CDC 1551 / Oshkosh</strain>
    </source>
</reference>
<proteinExistence type="inferred from homology"/>
<protein>
    <recommendedName>
        <fullName evidence="4">PPE family protein PPE10</fullName>
    </recommendedName>
</protein>
<comment type="function">
    <text evidence="1">Plays a major role in the integrity and stability of the capsule.</text>
</comment>
<comment type="subcellular location">
    <subcellularLocation>
        <location evidence="2">Secreted</location>
    </subcellularLocation>
    <text evidence="2">Secreted via the ESX-5 / type VII secretion system (T7SS).</text>
</comment>
<comment type="similarity">
    <text evidence="4">Belongs to the mycobacterial PPE family.</text>
</comment>
<dbReference type="EMBL" id="AE000516">
    <property type="protein sequence ID" value="AAK44681.1"/>
    <property type="molecule type" value="Genomic_DNA"/>
</dbReference>
<dbReference type="PIR" id="C70830">
    <property type="entry name" value="C70830"/>
</dbReference>
<dbReference type="RefSeq" id="WP_003402239.1">
    <property type="nucleotide sequence ID" value="NZ_KK341227.1"/>
</dbReference>
<dbReference type="SMR" id="P9WI40"/>
<dbReference type="KEGG" id="mtc:MT0458"/>
<dbReference type="PATRIC" id="fig|83331.31.peg.485"/>
<dbReference type="HOGENOM" id="CLU_000243_4_6_11"/>
<dbReference type="Proteomes" id="UP000001020">
    <property type="component" value="Chromosome"/>
</dbReference>
<dbReference type="GO" id="GO:0005576">
    <property type="term" value="C:extracellular region"/>
    <property type="evidence" value="ECO:0007669"/>
    <property type="project" value="UniProtKB-SubCell"/>
</dbReference>
<dbReference type="GO" id="GO:0052572">
    <property type="term" value="P:response to host immune response"/>
    <property type="evidence" value="ECO:0007669"/>
    <property type="project" value="TreeGrafter"/>
</dbReference>
<dbReference type="FunFam" id="1.20.1260.20:FF:000001">
    <property type="entry name" value="PPE family protein PPE41"/>
    <property type="match status" value="1"/>
</dbReference>
<dbReference type="Gene3D" id="1.20.1260.20">
    <property type="entry name" value="PPE superfamily"/>
    <property type="match status" value="1"/>
</dbReference>
<dbReference type="InterPro" id="IPR002989">
    <property type="entry name" value="Mycobac_pentapep"/>
</dbReference>
<dbReference type="InterPro" id="IPR000030">
    <property type="entry name" value="PPE_dom"/>
</dbReference>
<dbReference type="InterPro" id="IPR038332">
    <property type="entry name" value="PPE_sf"/>
</dbReference>
<dbReference type="PANTHER" id="PTHR46766">
    <property type="entry name" value="GLUTAMINE-RICH PROTEIN 2"/>
    <property type="match status" value="1"/>
</dbReference>
<dbReference type="PANTHER" id="PTHR46766:SF1">
    <property type="entry name" value="GLUTAMINE-RICH PROTEIN 2"/>
    <property type="match status" value="1"/>
</dbReference>
<dbReference type="Pfam" id="PF01469">
    <property type="entry name" value="Pentapeptide_2"/>
    <property type="match status" value="2"/>
</dbReference>
<dbReference type="Pfam" id="PF00823">
    <property type="entry name" value="PPE"/>
    <property type="match status" value="1"/>
</dbReference>
<dbReference type="SUPFAM" id="SSF140459">
    <property type="entry name" value="PE/PPE dimer-like"/>
    <property type="match status" value="1"/>
</dbReference>
<accession>P9WI40</accession>
<accession>L0T6H1</accession>
<accession>O53727</accession>
<accession>P42611</accession>